<name>TSTD_DICDI</name>
<keyword id="KW-1003">Cell membrane</keyword>
<keyword id="KW-0963">Cytoplasm</keyword>
<keyword id="KW-0472">Membrane</keyword>
<keyword id="KW-1185">Reference proteome</keyword>
<gene>
    <name evidence="2" type="primary">tstD</name>
    <name type="ORF">DDB_G0350235</name>
</gene>
<feature type="chain" id="PRO_0000445761" description="TSET complex member tstD">
    <location>
        <begin position="1"/>
        <end position="154"/>
    </location>
</feature>
<accession>C0HLF1</accession>
<comment type="subunit">
    <text evidence="1">Component of the TSET complex, a heterohexamer composed of tstA, tstB, tstC, tstD, tstE and tstF, which may act in plasma membrane turnover. tstA, tstB, tstC and tstD are likely to be the core complex members with tstE and tstF acting as associated scaffold proteins.</text>
</comment>
<comment type="subcellular location">
    <subcellularLocation>
        <location evidence="1">Cell membrane</location>
        <topology evidence="3">Peripheral membrane protein</topology>
    </subcellularLocation>
    <subcellularLocation>
        <location evidence="1">Cytoplasm</location>
    </subcellularLocation>
</comment>
<comment type="disruption phenotype">
    <text evidence="1">Knockout cells grow at least as fast as a control axenic strain and differentiation also appears normal with fruiting bodies forming under appropriate stimuli. Uptake of FITC-dextran, an assay for fluid phase endocytosis, is unimpaired while uptake of FM1-43, a membrane marker, is slower than in the control.</text>
</comment>
<comment type="similarity">
    <text evidence="3">Belongs to the adaptor complexes small subunit family.</text>
</comment>
<proteinExistence type="evidence at protein level"/>
<evidence type="ECO:0000269" key="1">
    <source>
    </source>
</evidence>
<evidence type="ECO:0000303" key="2">
    <source>
    </source>
</evidence>
<evidence type="ECO:0000305" key="3"/>
<organism>
    <name type="scientific">Dictyostelium discoideum</name>
    <name type="common">Social amoeba</name>
    <dbReference type="NCBI Taxonomy" id="44689"/>
    <lineage>
        <taxon>Eukaryota</taxon>
        <taxon>Amoebozoa</taxon>
        <taxon>Evosea</taxon>
        <taxon>Eumycetozoa</taxon>
        <taxon>Dictyostelia</taxon>
        <taxon>Dictyosteliales</taxon>
        <taxon>Dictyosteliaceae</taxon>
        <taxon>Dictyostelium</taxon>
    </lineage>
</organism>
<dbReference type="EMBL" id="AAFI02000005">
    <property type="status" value="NOT_ANNOTATED_CDS"/>
    <property type="molecule type" value="Genomic_DNA"/>
</dbReference>
<dbReference type="SMR" id="C0HLF1"/>
<dbReference type="FunCoup" id="C0HLF1">
    <property type="interactions" value="7"/>
</dbReference>
<dbReference type="STRING" id="44689.C0HLF1"/>
<dbReference type="dictyBase" id="DDB_G0350235">
    <property type="gene designation" value="tstD"/>
</dbReference>
<dbReference type="VEuPathDB" id="AmoebaDB:DDB_G0271002"/>
<dbReference type="InParanoid" id="C0HLF1"/>
<dbReference type="PRO" id="PR:C0HLF1"/>
<dbReference type="Proteomes" id="UP000002195">
    <property type="component" value="Chromosome 1"/>
</dbReference>
<dbReference type="GO" id="GO:0030126">
    <property type="term" value="C:COPI vesicle coat"/>
    <property type="evidence" value="ECO:0000318"/>
    <property type="project" value="GO_Central"/>
</dbReference>
<dbReference type="GO" id="GO:0005886">
    <property type="term" value="C:plasma membrane"/>
    <property type="evidence" value="ECO:0007669"/>
    <property type="project" value="UniProtKB-SubCell"/>
</dbReference>
<dbReference type="GO" id="GO:0006891">
    <property type="term" value="P:intra-Golgi vesicle-mediated transport"/>
    <property type="evidence" value="ECO:0000318"/>
    <property type="project" value="GO_Central"/>
</dbReference>
<dbReference type="GO" id="GO:0006886">
    <property type="term" value="P:intracellular protein transport"/>
    <property type="evidence" value="ECO:0000318"/>
    <property type="project" value="GO_Central"/>
</dbReference>
<dbReference type="GO" id="GO:0060098">
    <property type="term" value="P:membrane reorganization involved in phagocytosis, engulfment"/>
    <property type="evidence" value="ECO:0000315"/>
    <property type="project" value="dictyBase"/>
</dbReference>
<dbReference type="GO" id="GO:0006890">
    <property type="term" value="P:retrograde vesicle-mediated transport, Golgi to endoplasmic reticulum"/>
    <property type="evidence" value="ECO:0000318"/>
    <property type="project" value="GO_Central"/>
</dbReference>
<dbReference type="FunFam" id="3.30.450.60:FF:000055">
    <property type="entry name" value="TSET complex member tstD"/>
    <property type="match status" value="1"/>
</dbReference>
<dbReference type="Gene3D" id="3.30.450.60">
    <property type="match status" value="1"/>
</dbReference>
<dbReference type="InterPro" id="IPR022775">
    <property type="entry name" value="AP_mu_sigma_su"/>
</dbReference>
<dbReference type="InterPro" id="IPR039652">
    <property type="entry name" value="Coatomer_zeta"/>
</dbReference>
<dbReference type="InterPro" id="IPR011012">
    <property type="entry name" value="Longin-like_dom_sf"/>
</dbReference>
<dbReference type="PANTHER" id="PTHR11043:SF1">
    <property type="entry name" value="TSET COMPLEX MEMBER TSTD"/>
    <property type="match status" value="1"/>
</dbReference>
<dbReference type="PANTHER" id="PTHR11043">
    <property type="entry name" value="ZETA-COAT PROTEIN"/>
    <property type="match status" value="1"/>
</dbReference>
<dbReference type="Pfam" id="PF01217">
    <property type="entry name" value="Clat_adaptor_s"/>
    <property type="match status" value="1"/>
</dbReference>
<dbReference type="SUPFAM" id="SSF64356">
    <property type="entry name" value="SNARE-like"/>
    <property type="match status" value="1"/>
</dbReference>
<reference evidence="3" key="1">
    <citation type="journal article" date="2005" name="Nature">
        <title>The genome of the social amoeba Dictyostelium discoideum.</title>
        <authorList>
            <person name="Eichinger L."/>
            <person name="Pachebat J.A."/>
            <person name="Gloeckner G."/>
            <person name="Rajandream M.A."/>
            <person name="Sucgang R."/>
            <person name="Berriman M."/>
            <person name="Song J."/>
            <person name="Olsen R."/>
            <person name="Szafranski K."/>
            <person name="Xu Q."/>
            <person name="Tunggal B."/>
            <person name="Kummerfeld S."/>
            <person name="Madera M."/>
            <person name="Konfortov B.A."/>
            <person name="Rivero F."/>
            <person name="Bankier A.T."/>
            <person name="Lehmann R."/>
            <person name="Hamlin N."/>
            <person name="Davies R."/>
            <person name="Gaudet P."/>
            <person name="Fey P."/>
            <person name="Pilcher K."/>
            <person name="Chen G."/>
            <person name="Saunders D."/>
            <person name="Sodergren E.J."/>
            <person name="Davis P."/>
            <person name="Kerhornou A."/>
            <person name="Nie X."/>
            <person name="Hall N."/>
            <person name="Anjard C."/>
            <person name="Hemphill L."/>
            <person name="Bason N."/>
            <person name="Farbrother P."/>
            <person name="Desany B."/>
            <person name="Just E."/>
            <person name="Morio T."/>
            <person name="Rost R."/>
            <person name="Churcher C.M."/>
            <person name="Cooper J."/>
            <person name="Haydock S."/>
            <person name="van Driessche N."/>
            <person name="Cronin A."/>
            <person name="Goodhead I."/>
            <person name="Muzny D.M."/>
            <person name="Mourier T."/>
            <person name="Pain A."/>
            <person name="Lu M."/>
            <person name="Harper D."/>
            <person name="Lindsay R."/>
            <person name="Hauser H."/>
            <person name="James K.D."/>
            <person name="Quiles M."/>
            <person name="Madan Babu M."/>
            <person name="Saito T."/>
            <person name="Buchrieser C."/>
            <person name="Wardroper A."/>
            <person name="Felder M."/>
            <person name="Thangavelu M."/>
            <person name="Johnson D."/>
            <person name="Knights A."/>
            <person name="Loulseged H."/>
            <person name="Mungall K.L."/>
            <person name="Oliver K."/>
            <person name="Price C."/>
            <person name="Quail M.A."/>
            <person name="Urushihara H."/>
            <person name="Hernandez J."/>
            <person name="Rabbinowitsch E."/>
            <person name="Steffen D."/>
            <person name="Sanders M."/>
            <person name="Ma J."/>
            <person name="Kohara Y."/>
            <person name="Sharp S."/>
            <person name="Simmonds M.N."/>
            <person name="Spiegler S."/>
            <person name="Tivey A."/>
            <person name="Sugano S."/>
            <person name="White B."/>
            <person name="Walker D."/>
            <person name="Woodward J.R."/>
            <person name="Winckler T."/>
            <person name="Tanaka Y."/>
            <person name="Shaulsky G."/>
            <person name="Schleicher M."/>
            <person name="Weinstock G.M."/>
            <person name="Rosenthal A."/>
            <person name="Cox E.C."/>
            <person name="Chisholm R.L."/>
            <person name="Gibbs R.A."/>
            <person name="Loomis W.F."/>
            <person name="Platzer M."/>
            <person name="Kay R.R."/>
            <person name="Williams J.G."/>
            <person name="Dear P.H."/>
            <person name="Noegel A.A."/>
            <person name="Barrell B.G."/>
            <person name="Kuspa A."/>
        </authorList>
    </citation>
    <scope>NUCLEOTIDE SEQUENCE [LARGE SCALE GENOMIC DNA]</scope>
    <source>
        <strain>AX4</strain>
    </source>
</reference>
<reference evidence="3" key="2">
    <citation type="journal article" date="2014" name="Elife">
        <title>Characterization of TSET, an ancient and widespread membrane trafficking complex.</title>
        <authorList>
            <person name="Hirst J."/>
            <person name="Schlacht A."/>
            <person name="Norcott J.P."/>
            <person name="Traynor D."/>
            <person name="Bloomfield G."/>
            <person name="Antrobus R."/>
            <person name="Kay R.R."/>
            <person name="Dacks J.B."/>
            <person name="Robinson M.S."/>
        </authorList>
    </citation>
    <scope>IDENTIFICATION IN THE TSET COMPLEX</scope>
    <scope>SUBCELLULAR LOCATION</scope>
    <scope>DISRUPTION PHENOTYPE</scope>
    <scope>IDENTIFICATION BY MASS SPECTROMETRY</scope>
</reference>
<protein>
    <recommendedName>
        <fullName evidence="3">TSET complex member tstD</fullName>
    </recommendedName>
    <alternativeName>
        <fullName evidence="2">Protein TSPOON</fullName>
    </alternativeName>
</protein>
<sequence>MINSLLITNNNGNIVFSKYYSNINDEKQSEYEKLLYQFTKDEWVNSKNEKHLVTEFSGYITVFTNVGDLMLFLCGSEEMDELALSDVFFPIIESLKDICKKKGVTEQNFIEQIPKFILYLDEIIQRGHLDQVQLESIQNYSSLKHDQPIKKDNV</sequence>